<protein>
    <recommendedName>
        <fullName evidence="1">N-acetylmuramic acid 6-phosphate etherase</fullName>
        <shortName evidence="1">MurNAc-6-P etherase</shortName>
        <ecNumber evidence="1">4.2.1.126</ecNumber>
    </recommendedName>
    <alternativeName>
        <fullName evidence="1">N-acetylmuramic acid 6-phosphate hydrolase</fullName>
    </alternativeName>
    <alternativeName>
        <fullName evidence="1">N-acetylmuramic acid 6-phosphate lyase</fullName>
    </alternativeName>
</protein>
<dbReference type="EC" id="4.2.1.126" evidence="1"/>
<dbReference type="EMBL" id="CP000668">
    <property type="protein sequence ID" value="ABP40643.1"/>
    <property type="molecule type" value="Genomic_DNA"/>
</dbReference>
<dbReference type="RefSeq" id="WP_002211565.1">
    <property type="nucleotide sequence ID" value="NZ_CP009715.1"/>
</dbReference>
<dbReference type="SMR" id="A4TMY1"/>
<dbReference type="GeneID" id="57975879"/>
<dbReference type="KEGG" id="ypp:YPDSF_2268"/>
<dbReference type="PATRIC" id="fig|386656.14.peg.3760"/>
<dbReference type="UniPathway" id="UPA00342"/>
<dbReference type="UniPathway" id="UPA00343"/>
<dbReference type="UniPathway" id="UPA00544"/>
<dbReference type="GO" id="GO:0097367">
    <property type="term" value="F:carbohydrate derivative binding"/>
    <property type="evidence" value="ECO:0007669"/>
    <property type="project" value="InterPro"/>
</dbReference>
<dbReference type="GO" id="GO:0016835">
    <property type="term" value="F:carbon-oxygen lyase activity"/>
    <property type="evidence" value="ECO:0007669"/>
    <property type="project" value="UniProtKB-UniRule"/>
</dbReference>
<dbReference type="GO" id="GO:0016803">
    <property type="term" value="F:ether hydrolase activity"/>
    <property type="evidence" value="ECO:0007669"/>
    <property type="project" value="TreeGrafter"/>
</dbReference>
<dbReference type="GO" id="GO:0097175">
    <property type="term" value="P:1,6-anhydro-N-acetyl-beta-muramic acid catabolic process"/>
    <property type="evidence" value="ECO:0007669"/>
    <property type="project" value="UniProtKB-UniRule"/>
</dbReference>
<dbReference type="GO" id="GO:0046348">
    <property type="term" value="P:amino sugar catabolic process"/>
    <property type="evidence" value="ECO:0007669"/>
    <property type="project" value="InterPro"/>
</dbReference>
<dbReference type="GO" id="GO:0097173">
    <property type="term" value="P:N-acetylmuramic acid catabolic process"/>
    <property type="evidence" value="ECO:0007669"/>
    <property type="project" value="UniProtKB-UniPathway"/>
</dbReference>
<dbReference type="GO" id="GO:0009254">
    <property type="term" value="P:peptidoglycan turnover"/>
    <property type="evidence" value="ECO:0007669"/>
    <property type="project" value="UniProtKB-UniRule"/>
</dbReference>
<dbReference type="CDD" id="cd05007">
    <property type="entry name" value="SIS_Etherase"/>
    <property type="match status" value="1"/>
</dbReference>
<dbReference type="FunFam" id="1.10.8.1080:FF:000001">
    <property type="entry name" value="N-acetylmuramic acid 6-phosphate etherase"/>
    <property type="match status" value="1"/>
</dbReference>
<dbReference type="FunFam" id="3.40.50.10490:FF:000014">
    <property type="entry name" value="N-acetylmuramic acid 6-phosphate etherase"/>
    <property type="match status" value="1"/>
</dbReference>
<dbReference type="Gene3D" id="1.10.8.1080">
    <property type="match status" value="1"/>
</dbReference>
<dbReference type="Gene3D" id="3.40.50.10490">
    <property type="entry name" value="Glucose-6-phosphate isomerase like protein, domain 1"/>
    <property type="match status" value="1"/>
</dbReference>
<dbReference type="HAMAP" id="MF_00068">
    <property type="entry name" value="MurQ"/>
    <property type="match status" value="1"/>
</dbReference>
<dbReference type="InterPro" id="IPR005488">
    <property type="entry name" value="Etherase_MurQ"/>
</dbReference>
<dbReference type="InterPro" id="IPR005486">
    <property type="entry name" value="Glucokinase_regulatory_CS"/>
</dbReference>
<dbReference type="InterPro" id="IPR040190">
    <property type="entry name" value="MURQ/GCKR"/>
</dbReference>
<dbReference type="InterPro" id="IPR001347">
    <property type="entry name" value="SIS_dom"/>
</dbReference>
<dbReference type="InterPro" id="IPR046348">
    <property type="entry name" value="SIS_dom_sf"/>
</dbReference>
<dbReference type="InterPro" id="IPR009060">
    <property type="entry name" value="UBA-like_sf"/>
</dbReference>
<dbReference type="NCBIfam" id="TIGR00274">
    <property type="entry name" value="N-acetylmuramic acid 6-phosphate etherase"/>
    <property type="match status" value="1"/>
</dbReference>
<dbReference type="NCBIfam" id="NF003915">
    <property type="entry name" value="PRK05441.1"/>
    <property type="match status" value="1"/>
</dbReference>
<dbReference type="NCBIfam" id="NF009222">
    <property type="entry name" value="PRK12570.1"/>
    <property type="match status" value="1"/>
</dbReference>
<dbReference type="PANTHER" id="PTHR10088">
    <property type="entry name" value="GLUCOKINASE REGULATORY PROTEIN"/>
    <property type="match status" value="1"/>
</dbReference>
<dbReference type="PANTHER" id="PTHR10088:SF5">
    <property type="entry name" value="N-ACETYLMURAMIC ACID 6-PHOSPHATE ETHERASE"/>
    <property type="match status" value="1"/>
</dbReference>
<dbReference type="Pfam" id="PF20741">
    <property type="entry name" value="GKRP-like_C"/>
    <property type="match status" value="1"/>
</dbReference>
<dbReference type="Pfam" id="PF22645">
    <property type="entry name" value="GKRP_SIS_N"/>
    <property type="match status" value="1"/>
</dbReference>
<dbReference type="SUPFAM" id="SSF53697">
    <property type="entry name" value="SIS domain"/>
    <property type="match status" value="1"/>
</dbReference>
<dbReference type="SUPFAM" id="SSF46934">
    <property type="entry name" value="UBA-like"/>
    <property type="match status" value="1"/>
</dbReference>
<dbReference type="PROSITE" id="PS01272">
    <property type="entry name" value="GCKR"/>
    <property type="match status" value="1"/>
</dbReference>
<dbReference type="PROSITE" id="PS51464">
    <property type="entry name" value="SIS"/>
    <property type="match status" value="1"/>
</dbReference>
<gene>
    <name evidence="1" type="primary">murQ</name>
    <name type="ordered locus">YPDSF_2268</name>
</gene>
<accession>A4TMY1</accession>
<reference key="1">
    <citation type="submission" date="2007-02" db="EMBL/GenBank/DDBJ databases">
        <title>Complete sequence of chromosome of Yersinia pestis Pestoides F.</title>
        <authorList>
            <consortium name="US DOE Joint Genome Institute"/>
            <person name="Copeland A."/>
            <person name="Lucas S."/>
            <person name="Lapidus A."/>
            <person name="Barry K."/>
            <person name="Detter J.C."/>
            <person name="Glavina del Rio T."/>
            <person name="Hammon N."/>
            <person name="Israni S."/>
            <person name="Dalin E."/>
            <person name="Tice H."/>
            <person name="Pitluck S."/>
            <person name="Di Bartolo G."/>
            <person name="Chain P."/>
            <person name="Malfatti S."/>
            <person name="Shin M."/>
            <person name="Vergez L."/>
            <person name="Schmutz J."/>
            <person name="Larimer F."/>
            <person name="Land M."/>
            <person name="Hauser L."/>
            <person name="Worsham P."/>
            <person name="Chu M."/>
            <person name="Bearden S."/>
            <person name="Garcia E."/>
            <person name="Richardson P."/>
        </authorList>
    </citation>
    <scope>NUCLEOTIDE SEQUENCE [LARGE SCALE GENOMIC DNA]</scope>
    <source>
        <strain>Pestoides F</strain>
    </source>
</reference>
<feature type="chain" id="PRO_1000009137" description="N-acetylmuramic acid 6-phosphate etherase">
    <location>
        <begin position="1"/>
        <end position="295"/>
    </location>
</feature>
<feature type="domain" description="SIS" evidence="1">
    <location>
        <begin position="55"/>
        <end position="218"/>
    </location>
</feature>
<feature type="active site" description="Proton donor" evidence="1">
    <location>
        <position position="83"/>
    </location>
</feature>
<feature type="active site" evidence="1">
    <location>
        <position position="114"/>
    </location>
</feature>
<evidence type="ECO:0000255" key="1">
    <source>
        <dbReference type="HAMAP-Rule" id="MF_00068"/>
    </source>
</evidence>
<name>MURQ_YERPP</name>
<proteinExistence type="inferred from homology"/>
<sequence>MSLGALISESRNPATMELDKLSTLAMLTCINDEDRKVPDAIRLVLPAVAQAVDLAADALKQGGRLIYLGAGTSGRLGVLDASECPPTFGVPHGMVIGLIAGGPGALLKAVEGAEDDIALGMRDLQDLQLTATDMVVGLAASGRTPYVIGALRYARELGCPTAAISCNPDSPIAQEAQVAISPVVGPEALTGSTRMKSGTAQKLVLNMLSTGAMVKLGKVYQNLMVDVKATNVKLVDRACRIVVEATGVSRAEAEHALRQTDFEVKPAILMLLKGVSAEQARQDLRQHHGYLRAAL</sequence>
<keyword id="KW-0119">Carbohydrate metabolism</keyword>
<keyword id="KW-0456">Lyase</keyword>
<comment type="function">
    <text evidence="1">Specifically catalyzes the cleavage of the D-lactyl ether substituent of MurNAc 6-phosphate, producing GlcNAc 6-phosphate and D-lactate. Together with AnmK, is also required for the utilization of anhydro-N-acetylmuramic acid (anhMurNAc) either imported from the medium or derived from its own cell wall murein, and thus plays a role in cell wall recycling.</text>
</comment>
<comment type="catalytic activity">
    <reaction evidence="1">
        <text>N-acetyl-D-muramate 6-phosphate + H2O = N-acetyl-D-glucosamine 6-phosphate + (R)-lactate</text>
        <dbReference type="Rhea" id="RHEA:26410"/>
        <dbReference type="ChEBI" id="CHEBI:15377"/>
        <dbReference type="ChEBI" id="CHEBI:16004"/>
        <dbReference type="ChEBI" id="CHEBI:57513"/>
        <dbReference type="ChEBI" id="CHEBI:58722"/>
        <dbReference type="EC" id="4.2.1.126"/>
    </reaction>
</comment>
<comment type="pathway">
    <text evidence="1">Amino-sugar metabolism; 1,6-anhydro-N-acetylmuramate degradation.</text>
</comment>
<comment type="pathway">
    <text evidence="1">Amino-sugar metabolism; N-acetylmuramate degradation.</text>
</comment>
<comment type="pathway">
    <text evidence="1">Cell wall biogenesis; peptidoglycan recycling.</text>
</comment>
<comment type="subunit">
    <text evidence="1">Homodimer.</text>
</comment>
<comment type="induction">
    <text evidence="1">Induced by MurNAc 6-phosphate that releases the repressor MurR from the DNA. Repressed by MurR in the absence of MurNAc 6-phosphate.</text>
</comment>
<comment type="miscellaneous">
    <text evidence="1">A lyase-type mechanism (elimination/hydration) is suggested for the cleavage of the lactyl ether bond of MurNAc 6-phosphate, with the formation of an alpha,beta-unsaturated aldehyde intermediate with (E)-stereochemistry, followed by the syn addition of water to give product.</text>
</comment>
<comment type="similarity">
    <text evidence="1">Belongs to the GCKR-like family. MurNAc-6-P etherase subfamily.</text>
</comment>
<organism>
    <name type="scientific">Yersinia pestis (strain Pestoides F)</name>
    <dbReference type="NCBI Taxonomy" id="386656"/>
    <lineage>
        <taxon>Bacteria</taxon>
        <taxon>Pseudomonadati</taxon>
        <taxon>Pseudomonadota</taxon>
        <taxon>Gammaproteobacteria</taxon>
        <taxon>Enterobacterales</taxon>
        <taxon>Yersiniaceae</taxon>
        <taxon>Yersinia</taxon>
    </lineage>
</organism>